<reference key="1">
    <citation type="submission" date="2008-02" db="EMBL/GenBank/DDBJ databases">
        <title>Complete sequence of Pseudomonas putida W619.</title>
        <authorList>
            <person name="Copeland A."/>
            <person name="Lucas S."/>
            <person name="Lapidus A."/>
            <person name="Barry K."/>
            <person name="Detter J.C."/>
            <person name="Glavina del Rio T."/>
            <person name="Dalin E."/>
            <person name="Tice H."/>
            <person name="Pitluck S."/>
            <person name="Chain P."/>
            <person name="Malfatti S."/>
            <person name="Shin M."/>
            <person name="Vergez L."/>
            <person name="Schmutz J."/>
            <person name="Larimer F."/>
            <person name="Land M."/>
            <person name="Hauser L."/>
            <person name="Kyrpides N."/>
            <person name="Kim E."/>
            <person name="Taghavi S."/>
            <person name="Vangronsveld D."/>
            <person name="van der Lelie D."/>
            <person name="Richardson P."/>
        </authorList>
    </citation>
    <scope>NUCLEOTIDE SEQUENCE [LARGE SCALE GENOMIC DNA]</scope>
    <source>
        <strain>W619</strain>
    </source>
</reference>
<protein>
    <recommendedName>
        <fullName evidence="1">Large ribosomal subunit protein uL4</fullName>
    </recommendedName>
    <alternativeName>
        <fullName evidence="3">50S ribosomal protein L4</fullName>
    </alternativeName>
</protein>
<comment type="function">
    <text evidence="1">One of the primary rRNA binding proteins, this protein initially binds near the 5'-end of the 23S rRNA. It is important during the early stages of 50S assembly. It makes multiple contacts with different domains of the 23S rRNA in the assembled 50S subunit and ribosome.</text>
</comment>
<comment type="function">
    <text evidence="1">Forms part of the polypeptide exit tunnel.</text>
</comment>
<comment type="subunit">
    <text evidence="1">Part of the 50S ribosomal subunit.</text>
</comment>
<comment type="similarity">
    <text evidence="1">Belongs to the universal ribosomal protein uL4 family.</text>
</comment>
<sequence>MQLNVNDAQAIEVSELTFGGEFNETLVHQAVVAYMAGGRQGTKQQKTRSDVAGGGKRPWRQKGTGRARAGTTRGPIWRGGGVTFAARPQDHSQKLNKKMYRAALRSILAELVRSDRLVVVQDFAVEAPKTKDLLNKLNGMGLSDVLIVSDAVDQNLYLAARNLPHVDVRDVQGSDPVSLIAYEKVLITVSAVKKFEELLG</sequence>
<organism>
    <name type="scientific">Pseudomonas putida (strain W619)</name>
    <dbReference type="NCBI Taxonomy" id="390235"/>
    <lineage>
        <taxon>Bacteria</taxon>
        <taxon>Pseudomonadati</taxon>
        <taxon>Pseudomonadota</taxon>
        <taxon>Gammaproteobacteria</taxon>
        <taxon>Pseudomonadales</taxon>
        <taxon>Pseudomonadaceae</taxon>
        <taxon>Pseudomonas</taxon>
    </lineage>
</organism>
<name>RL4_PSEPW</name>
<proteinExistence type="inferred from homology"/>
<evidence type="ECO:0000255" key="1">
    <source>
        <dbReference type="HAMAP-Rule" id="MF_01328"/>
    </source>
</evidence>
<evidence type="ECO:0000256" key="2">
    <source>
        <dbReference type="SAM" id="MobiDB-lite"/>
    </source>
</evidence>
<evidence type="ECO:0000305" key="3"/>
<feature type="chain" id="PRO_1000142172" description="Large ribosomal subunit protein uL4">
    <location>
        <begin position="1"/>
        <end position="200"/>
    </location>
</feature>
<feature type="region of interest" description="Disordered" evidence="2">
    <location>
        <begin position="38"/>
        <end position="72"/>
    </location>
</feature>
<keyword id="KW-0687">Ribonucleoprotein</keyword>
<keyword id="KW-0689">Ribosomal protein</keyword>
<keyword id="KW-0694">RNA-binding</keyword>
<keyword id="KW-0699">rRNA-binding</keyword>
<gene>
    <name evidence="1" type="primary">rplD</name>
    <name type="ordered locus">PputW619_4748</name>
</gene>
<dbReference type="EMBL" id="CP000949">
    <property type="protein sequence ID" value="ACA75224.1"/>
    <property type="molecule type" value="Genomic_DNA"/>
</dbReference>
<dbReference type="SMR" id="B1JDW3"/>
<dbReference type="STRING" id="390235.PputW619_4748"/>
<dbReference type="KEGG" id="ppw:PputW619_4748"/>
<dbReference type="eggNOG" id="COG0088">
    <property type="taxonomic scope" value="Bacteria"/>
</dbReference>
<dbReference type="HOGENOM" id="CLU_041575_5_2_6"/>
<dbReference type="OrthoDB" id="9803201at2"/>
<dbReference type="GO" id="GO:1990904">
    <property type="term" value="C:ribonucleoprotein complex"/>
    <property type="evidence" value="ECO:0007669"/>
    <property type="project" value="UniProtKB-KW"/>
</dbReference>
<dbReference type="GO" id="GO:0005840">
    <property type="term" value="C:ribosome"/>
    <property type="evidence" value="ECO:0007669"/>
    <property type="project" value="UniProtKB-KW"/>
</dbReference>
<dbReference type="GO" id="GO:0019843">
    <property type="term" value="F:rRNA binding"/>
    <property type="evidence" value="ECO:0007669"/>
    <property type="project" value="UniProtKB-UniRule"/>
</dbReference>
<dbReference type="GO" id="GO:0003735">
    <property type="term" value="F:structural constituent of ribosome"/>
    <property type="evidence" value="ECO:0007669"/>
    <property type="project" value="InterPro"/>
</dbReference>
<dbReference type="GO" id="GO:0006412">
    <property type="term" value="P:translation"/>
    <property type="evidence" value="ECO:0007669"/>
    <property type="project" value="UniProtKB-UniRule"/>
</dbReference>
<dbReference type="FunFam" id="3.40.1370.10:FF:000001">
    <property type="entry name" value="50S ribosomal protein L4"/>
    <property type="match status" value="1"/>
</dbReference>
<dbReference type="Gene3D" id="3.40.1370.10">
    <property type="match status" value="1"/>
</dbReference>
<dbReference type="HAMAP" id="MF_01328_B">
    <property type="entry name" value="Ribosomal_uL4_B"/>
    <property type="match status" value="1"/>
</dbReference>
<dbReference type="InterPro" id="IPR002136">
    <property type="entry name" value="Ribosomal_uL4"/>
</dbReference>
<dbReference type="InterPro" id="IPR013005">
    <property type="entry name" value="Ribosomal_uL4-like"/>
</dbReference>
<dbReference type="InterPro" id="IPR023574">
    <property type="entry name" value="Ribosomal_uL4_dom_sf"/>
</dbReference>
<dbReference type="NCBIfam" id="TIGR03953">
    <property type="entry name" value="rplD_bact"/>
    <property type="match status" value="1"/>
</dbReference>
<dbReference type="PANTHER" id="PTHR10746">
    <property type="entry name" value="50S RIBOSOMAL PROTEIN L4"/>
    <property type="match status" value="1"/>
</dbReference>
<dbReference type="PANTHER" id="PTHR10746:SF6">
    <property type="entry name" value="LARGE RIBOSOMAL SUBUNIT PROTEIN UL4M"/>
    <property type="match status" value="1"/>
</dbReference>
<dbReference type="Pfam" id="PF00573">
    <property type="entry name" value="Ribosomal_L4"/>
    <property type="match status" value="1"/>
</dbReference>
<dbReference type="SUPFAM" id="SSF52166">
    <property type="entry name" value="Ribosomal protein L4"/>
    <property type="match status" value="1"/>
</dbReference>
<accession>B1JDW3</accession>